<evidence type="ECO:0000255" key="1">
    <source>
        <dbReference type="HAMAP-Rule" id="MF_00530"/>
    </source>
</evidence>
<gene>
    <name evidence="1" type="primary">atpC</name>
    <name type="ordered locus">FTW_0141</name>
</gene>
<dbReference type="EMBL" id="CP000608">
    <property type="protein sequence ID" value="ABO46127.1"/>
    <property type="molecule type" value="Genomic_DNA"/>
</dbReference>
<dbReference type="RefSeq" id="WP_003019771.1">
    <property type="nucleotide sequence ID" value="NC_009257.1"/>
</dbReference>
<dbReference type="SMR" id="A4IW25"/>
<dbReference type="KEGG" id="ftw:FTW_0141"/>
<dbReference type="HOGENOM" id="CLU_084338_2_1_6"/>
<dbReference type="GO" id="GO:0005886">
    <property type="term" value="C:plasma membrane"/>
    <property type="evidence" value="ECO:0007669"/>
    <property type="project" value="UniProtKB-SubCell"/>
</dbReference>
<dbReference type="GO" id="GO:0045259">
    <property type="term" value="C:proton-transporting ATP synthase complex"/>
    <property type="evidence" value="ECO:0007669"/>
    <property type="project" value="UniProtKB-KW"/>
</dbReference>
<dbReference type="GO" id="GO:0005524">
    <property type="term" value="F:ATP binding"/>
    <property type="evidence" value="ECO:0007669"/>
    <property type="project" value="UniProtKB-UniRule"/>
</dbReference>
<dbReference type="GO" id="GO:0046933">
    <property type="term" value="F:proton-transporting ATP synthase activity, rotational mechanism"/>
    <property type="evidence" value="ECO:0007669"/>
    <property type="project" value="UniProtKB-UniRule"/>
</dbReference>
<dbReference type="CDD" id="cd12152">
    <property type="entry name" value="F1-ATPase_delta"/>
    <property type="match status" value="1"/>
</dbReference>
<dbReference type="Gene3D" id="2.60.15.10">
    <property type="entry name" value="F0F1 ATP synthase delta/epsilon subunit, N-terminal"/>
    <property type="match status" value="1"/>
</dbReference>
<dbReference type="HAMAP" id="MF_00530">
    <property type="entry name" value="ATP_synth_epsil_bac"/>
    <property type="match status" value="1"/>
</dbReference>
<dbReference type="InterPro" id="IPR001469">
    <property type="entry name" value="ATP_synth_F1_dsu/esu"/>
</dbReference>
<dbReference type="InterPro" id="IPR020546">
    <property type="entry name" value="ATP_synth_F1_dsu/esu_N"/>
</dbReference>
<dbReference type="InterPro" id="IPR036771">
    <property type="entry name" value="ATPsynth_dsu/esu_N"/>
</dbReference>
<dbReference type="NCBIfam" id="TIGR01216">
    <property type="entry name" value="ATP_synt_epsi"/>
    <property type="match status" value="1"/>
</dbReference>
<dbReference type="NCBIfam" id="NF009986">
    <property type="entry name" value="PRK13452.1"/>
    <property type="match status" value="1"/>
</dbReference>
<dbReference type="PANTHER" id="PTHR13822">
    <property type="entry name" value="ATP SYNTHASE DELTA/EPSILON CHAIN"/>
    <property type="match status" value="1"/>
</dbReference>
<dbReference type="PANTHER" id="PTHR13822:SF10">
    <property type="entry name" value="ATP SYNTHASE EPSILON CHAIN, CHLOROPLASTIC"/>
    <property type="match status" value="1"/>
</dbReference>
<dbReference type="Pfam" id="PF02823">
    <property type="entry name" value="ATP-synt_DE_N"/>
    <property type="match status" value="1"/>
</dbReference>
<dbReference type="SUPFAM" id="SSF51344">
    <property type="entry name" value="Epsilon subunit of F1F0-ATP synthase N-terminal domain"/>
    <property type="match status" value="1"/>
</dbReference>
<proteinExistence type="inferred from homology"/>
<reference key="1">
    <citation type="journal article" date="2007" name="PLoS ONE">
        <title>Complete genomic characterization of a pathogenic A.II strain of Francisella tularensis subspecies tularensis.</title>
        <authorList>
            <person name="Beckstrom-Sternberg S.M."/>
            <person name="Auerbach R.K."/>
            <person name="Godbole S."/>
            <person name="Pearson J.V."/>
            <person name="Beckstrom-Sternberg J.S."/>
            <person name="Deng Z."/>
            <person name="Munk C."/>
            <person name="Kubota K."/>
            <person name="Zhou Y."/>
            <person name="Bruce D."/>
            <person name="Noronha J."/>
            <person name="Scheuermann R.H."/>
            <person name="Wang A."/>
            <person name="Wei X."/>
            <person name="Wang J."/>
            <person name="Hao J."/>
            <person name="Wagner D.M."/>
            <person name="Brettin T.S."/>
            <person name="Brown N."/>
            <person name="Gilna P."/>
            <person name="Keim P.S."/>
        </authorList>
    </citation>
    <scope>NUCLEOTIDE SEQUENCE [LARGE SCALE GENOMIC DNA]</scope>
    <source>
        <strain>WY96-3418</strain>
    </source>
</reference>
<feature type="chain" id="PRO_1000056484" description="ATP synthase epsilon chain">
    <location>
        <begin position="1"/>
        <end position="145"/>
    </location>
</feature>
<protein>
    <recommendedName>
        <fullName evidence="1">ATP synthase epsilon chain</fullName>
    </recommendedName>
    <alternativeName>
        <fullName evidence="1">ATP synthase F1 sector epsilon subunit</fullName>
    </alternativeName>
    <alternativeName>
        <fullName evidence="1">F-ATPase epsilon subunit</fullName>
    </alternativeName>
</protein>
<name>ATPE_FRATW</name>
<organism>
    <name type="scientific">Francisella tularensis subsp. tularensis (strain WY96-3418)</name>
    <dbReference type="NCBI Taxonomy" id="418136"/>
    <lineage>
        <taxon>Bacteria</taxon>
        <taxon>Pseudomonadati</taxon>
        <taxon>Pseudomonadota</taxon>
        <taxon>Gammaproteobacteria</taxon>
        <taxon>Thiotrichales</taxon>
        <taxon>Francisellaceae</taxon>
        <taxon>Francisella</taxon>
    </lineage>
</organism>
<accession>A4IW25</accession>
<sequence length="145" mass="15767">MTKKYLKVDVVSPLGSVFKGEADMVSLRGSAGEMGIAYGHTELLSTLPAGVVNVRKDQHTDVLYVSGGIVEVTPTRVTIMVDDMERAENLNQAEAEKARARAKEVLKNPDASKLDIEAANKRLKEADARLKALNSSNGLYYSKDD</sequence>
<keyword id="KW-0066">ATP synthesis</keyword>
<keyword id="KW-0997">Cell inner membrane</keyword>
<keyword id="KW-1003">Cell membrane</keyword>
<keyword id="KW-0139">CF(1)</keyword>
<keyword id="KW-0375">Hydrogen ion transport</keyword>
<keyword id="KW-0406">Ion transport</keyword>
<keyword id="KW-0472">Membrane</keyword>
<keyword id="KW-0813">Transport</keyword>
<comment type="function">
    <text evidence="1">Produces ATP from ADP in the presence of a proton gradient across the membrane.</text>
</comment>
<comment type="subunit">
    <text evidence="1">F-type ATPases have 2 components, CF(1) - the catalytic core - and CF(0) - the membrane proton channel. CF(1) has five subunits: alpha(3), beta(3), gamma(1), delta(1), epsilon(1). CF(0) has three main subunits: a, b and c.</text>
</comment>
<comment type="subcellular location">
    <subcellularLocation>
        <location evidence="1">Cell inner membrane</location>
        <topology evidence="1">Peripheral membrane protein</topology>
    </subcellularLocation>
</comment>
<comment type="similarity">
    <text evidence="1">Belongs to the ATPase epsilon chain family.</text>
</comment>